<reference key="1">
    <citation type="journal article" date="2005" name="Nucleic Acids Res.">
        <title>Genome dynamics and diversity of Shigella species, the etiologic agents of bacillary dysentery.</title>
        <authorList>
            <person name="Yang F."/>
            <person name="Yang J."/>
            <person name="Zhang X."/>
            <person name="Chen L."/>
            <person name="Jiang Y."/>
            <person name="Yan Y."/>
            <person name="Tang X."/>
            <person name="Wang J."/>
            <person name="Xiong Z."/>
            <person name="Dong J."/>
            <person name="Xue Y."/>
            <person name="Zhu Y."/>
            <person name="Xu X."/>
            <person name="Sun L."/>
            <person name="Chen S."/>
            <person name="Nie H."/>
            <person name="Peng J."/>
            <person name="Xu J."/>
            <person name="Wang Y."/>
            <person name="Yuan Z."/>
            <person name="Wen Y."/>
            <person name="Yao Z."/>
            <person name="Shen Y."/>
            <person name="Qiang B."/>
            <person name="Hou Y."/>
            <person name="Yu J."/>
            <person name="Jin Q."/>
        </authorList>
    </citation>
    <scope>NUCLEOTIDE SEQUENCE [LARGE SCALE GENOMIC DNA]</scope>
    <source>
        <strain>Ss046</strain>
    </source>
</reference>
<gene>
    <name evidence="1" type="primary">ulaE</name>
    <name type="ordered locus">SSON_4379</name>
</gene>
<comment type="function">
    <text evidence="1">Catalyzes the isomerization of L-xylulose-5-phosphate to L-ribulose-5-phosphate. Is involved in the anaerobic L-ascorbate utilization.</text>
</comment>
<comment type="catalytic activity">
    <reaction evidence="1">
        <text>L-ribulose 5-phosphate = L-xylulose 5-phosphate</text>
        <dbReference type="Rhea" id="RHEA:18497"/>
        <dbReference type="ChEBI" id="CHEBI:57829"/>
        <dbReference type="ChEBI" id="CHEBI:58226"/>
        <dbReference type="EC" id="5.1.3.22"/>
    </reaction>
</comment>
<comment type="pathway">
    <text evidence="1">Cofactor degradation; L-ascorbate degradation; D-xylulose 5-phosphate from L-ascorbate: step 3/4.</text>
</comment>
<comment type="induction">
    <text evidence="1">Induced by L-ascorbate. Repressed by UlaR.</text>
</comment>
<comment type="similarity">
    <text evidence="1">Belongs to the L-ribulose-5-phosphate 3-epimerase family.</text>
</comment>
<evidence type="ECO:0000255" key="1">
    <source>
        <dbReference type="HAMAP-Rule" id="MF_01951"/>
    </source>
</evidence>
<proteinExistence type="inferred from homology"/>
<feature type="chain" id="PRO_0000233260" description="L-ribulose-5-phosphate 3-epimerase UlaE">
    <location>
        <begin position="1"/>
        <end position="284"/>
    </location>
</feature>
<keyword id="KW-0413">Isomerase</keyword>
<keyword id="KW-1185">Reference proteome</keyword>
<sequence length="284" mass="32075">MLSKQIPLGIYEKALPAGECWLERLRLAKTLGFDFVEMSVDETDERLSRLDWSREQRLALVNAIVETGVRVPSMCLSAHRRFPLGSEDDAVRAQGLEIMRKAIQFAQDVGIRVIQLAGYDVYYQEANNETRRRFRDGLKESVEMASRAQVTLAMEIMDYPLMNSISKALGYAHYLNNPWFQLYPDIGNLSAWDNDVQMELQAGIGHIVAVHVKDTKPGVFKNVPFGEGVVDFERCFETLKQSGYCGPYLIEMWSETAEDPAAEVVKARDWVKARMAKAGTVEAA</sequence>
<organism>
    <name type="scientific">Shigella sonnei (strain Ss046)</name>
    <dbReference type="NCBI Taxonomy" id="300269"/>
    <lineage>
        <taxon>Bacteria</taxon>
        <taxon>Pseudomonadati</taxon>
        <taxon>Pseudomonadota</taxon>
        <taxon>Gammaproteobacteria</taxon>
        <taxon>Enterobacterales</taxon>
        <taxon>Enterobacteriaceae</taxon>
        <taxon>Shigella</taxon>
    </lineage>
</organism>
<accession>Q3YUF1</accession>
<protein>
    <recommendedName>
        <fullName evidence="1">L-ribulose-5-phosphate 3-epimerase UlaE</fullName>
        <ecNumber evidence="1">5.1.3.22</ecNumber>
    </recommendedName>
    <alternativeName>
        <fullName evidence="1">L-ascorbate utilization protein E</fullName>
    </alternativeName>
    <alternativeName>
        <fullName evidence="1">L-xylulose-5-phosphate 3-epimerase</fullName>
    </alternativeName>
</protein>
<dbReference type="EC" id="5.1.3.22" evidence="1"/>
<dbReference type="EMBL" id="CP000038">
    <property type="protein sequence ID" value="AAZ90861.1"/>
    <property type="molecule type" value="Genomic_DNA"/>
</dbReference>
<dbReference type="RefSeq" id="WP_000949541.1">
    <property type="nucleotide sequence ID" value="NC_007384.1"/>
</dbReference>
<dbReference type="SMR" id="Q3YUF1"/>
<dbReference type="GeneID" id="93777627"/>
<dbReference type="KEGG" id="ssn:SSON_4379"/>
<dbReference type="HOGENOM" id="CLU_082738_0_0_6"/>
<dbReference type="UniPathway" id="UPA00263">
    <property type="reaction ID" value="UER00379"/>
</dbReference>
<dbReference type="Proteomes" id="UP000002529">
    <property type="component" value="Chromosome"/>
</dbReference>
<dbReference type="GO" id="GO:0016861">
    <property type="term" value="F:intramolecular oxidoreductase activity, interconverting aldoses and ketoses"/>
    <property type="evidence" value="ECO:0007669"/>
    <property type="project" value="InterPro"/>
</dbReference>
<dbReference type="GO" id="GO:0034015">
    <property type="term" value="F:L-ribulose-5-phosphate 3-epimerase activity"/>
    <property type="evidence" value="ECO:0007669"/>
    <property type="project" value="UniProtKB-UniRule"/>
</dbReference>
<dbReference type="GO" id="GO:0019854">
    <property type="term" value="P:L-ascorbic acid catabolic process"/>
    <property type="evidence" value="ECO:0007669"/>
    <property type="project" value="UniProtKB-UniRule"/>
</dbReference>
<dbReference type="FunFam" id="3.20.20.150:FF:000003">
    <property type="entry name" value="L-ribulose-5-phosphate 3-epimerase UlaE"/>
    <property type="match status" value="1"/>
</dbReference>
<dbReference type="Gene3D" id="3.20.20.150">
    <property type="entry name" value="Divalent-metal-dependent TIM barrel enzymes"/>
    <property type="match status" value="1"/>
</dbReference>
<dbReference type="HAMAP" id="MF_01951">
    <property type="entry name" value="UlaE"/>
    <property type="match status" value="1"/>
</dbReference>
<dbReference type="InterPro" id="IPR004560">
    <property type="entry name" value="L-Ru-5P_3-Epase"/>
</dbReference>
<dbReference type="InterPro" id="IPR023492">
    <property type="entry name" value="L-Ru-5P_3-Epase_Enterobacteria"/>
</dbReference>
<dbReference type="InterPro" id="IPR050417">
    <property type="entry name" value="Sugar_Epim/Isomerase"/>
</dbReference>
<dbReference type="InterPro" id="IPR036237">
    <property type="entry name" value="Xyl_isomerase-like_sf"/>
</dbReference>
<dbReference type="InterPro" id="IPR013022">
    <property type="entry name" value="Xyl_isomerase-like_TIM-brl"/>
</dbReference>
<dbReference type="NCBIfam" id="TIGR00542">
    <property type="entry name" value="hxl6Piso_put"/>
    <property type="match status" value="1"/>
</dbReference>
<dbReference type="NCBIfam" id="NF009688">
    <property type="entry name" value="PRK13209.1"/>
    <property type="match status" value="1"/>
</dbReference>
<dbReference type="NCBIfam" id="NF009689">
    <property type="entry name" value="PRK13210.1"/>
    <property type="match status" value="1"/>
</dbReference>
<dbReference type="PANTHER" id="PTHR43489">
    <property type="entry name" value="ISOMERASE"/>
    <property type="match status" value="1"/>
</dbReference>
<dbReference type="PANTHER" id="PTHR43489:SF8">
    <property type="entry name" value="L-RIBULOSE-5-PHOSPHATE 3-EPIMERASE ULAE"/>
    <property type="match status" value="1"/>
</dbReference>
<dbReference type="Pfam" id="PF01261">
    <property type="entry name" value="AP_endonuc_2"/>
    <property type="match status" value="1"/>
</dbReference>
<dbReference type="SUPFAM" id="SSF51658">
    <property type="entry name" value="Xylose isomerase-like"/>
    <property type="match status" value="1"/>
</dbReference>
<name>ULAE_SHISS</name>